<accession>A6UAW6</accession>
<proteinExistence type="inferred from homology"/>
<protein>
    <recommendedName>
        <fullName evidence="1">Ketol-acid reductoisomerase (NADP(+))</fullName>
        <shortName evidence="1">KARI</shortName>
        <ecNumber evidence="1">1.1.1.86</ecNumber>
    </recommendedName>
    <alternativeName>
        <fullName evidence="1">Acetohydroxy-acid isomeroreductase</fullName>
        <shortName evidence="1">AHIR</shortName>
    </alternativeName>
    <alternativeName>
        <fullName evidence="1">Alpha-keto-beta-hydroxylacyl reductoisomerase</fullName>
    </alternativeName>
    <alternativeName>
        <fullName evidence="1">Ketol-acid reductoisomerase type 1</fullName>
    </alternativeName>
    <alternativeName>
        <fullName evidence="1">Ketol-acid reductoisomerase type I</fullName>
    </alternativeName>
</protein>
<keyword id="KW-0028">Amino-acid biosynthesis</keyword>
<keyword id="KW-0100">Branched-chain amino acid biosynthesis</keyword>
<keyword id="KW-0460">Magnesium</keyword>
<keyword id="KW-0479">Metal-binding</keyword>
<keyword id="KW-0521">NADP</keyword>
<keyword id="KW-0560">Oxidoreductase</keyword>
<comment type="function">
    <text evidence="1">Involved in the biosynthesis of branched-chain amino acids (BCAA). Catalyzes an alkyl-migration followed by a ketol-acid reduction of (S)-2-acetolactate (S2AL) to yield (R)-2,3-dihydroxy-isovalerate. In the isomerase reaction, S2AL is rearranged via a Mg-dependent methyl migration to produce 3-hydroxy-3-methyl-2-ketobutyrate (HMKB). In the reductase reaction, this 2-ketoacid undergoes a metal-dependent reduction by NADPH to yield (R)-2,3-dihydroxy-isovalerate.</text>
</comment>
<comment type="catalytic activity">
    <reaction evidence="1">
        <text>(2R)-2,3-dihydroxy-3-methylbutanoate + NADP(+) = (2S)-2-acetolactate + NADPH + H(+)</text>
        <dbReference type="Rhea" id="RHEA:22068"/>
        <dbReference type="ChEBI" id="CHEBI:15378"/>
        <dbReference type="ChEBI" id="CHEBI:49072"/>
        <dbReference type="ChEBI" id="CHEBI:57783"/>
        <dbReference type="ChEBI" id="CHEBI:58349"/>
        <dbReference type="ChEBI" id="CHEBI:58476"/>
        <dbReference type="EC" id="1.1.1.86"/>
    </reaction>
</comment>
<comment type="catalytic activity">
    <reaction evidence="1">
        <text>(2R,3R)-2,3-dihydroxy-3-methylpentanoate + NADP(+) = (S)-2-ethyl-2-hydroxy-3-oxobutanoate + NADPH + H(+)</text>
        <dbReference type="Rhea" id="RHEA:13493"/>
        <dbReference type="ChEBI" id="CHEBI:15378"/>
        <dbReference type="ChEBI" id="CHEBI:49256"/>
        <dbReference type="ChEBI" id="CHEBI:49258"/>
        <dbReference type="ChEBI" id="CHEBI:57783"/>
        <dbReference type="ChEBI" id="CHEBI:58349"/>
        <dbReference type="EC" id="1.1.1.86"/>
    </reaction>
</comment>
<comment type="cofactor">
    <cofactor evidence="1">
        <name>Mg(2+)</name>
        <dbReference type="ChEBI" id="CHEBI:18420"/>
    </cofactor>
    <text evidence="1">Binds 2 magnesium ions per subunit.</text>
</comment>
<comment type="pathway">
    <text evidence="1">Amino-acid biosynthesis; L-isoleucine biosynthesis; L-isoleucine from 2-oxobutanoate: step 2/4.</text>
</comment>
<comment type="pathway">
    <text evidence="1">Amino-acid biosynthesis; L-valine biosynthesis; L-valine from pyruvate: step 2/4.</text>
</comment>
<comment type="similarity">
    <text evidence="1">Belongs to the ketol-acid reductoisomerase family.</text>
</comment>
<gene>
    <name evidence="1" type="primary">ilvC</name>
    <name type="ordered locus">Smed_1962</name>
</gene>
<organism>
    <name type="scientific">Sinorhizobium medicae (strain WSM419)</name>
    <name type="common">Ensifer medicae</name>
    <dbReference type="NCBI Taxonomy" id="366394"/>
    <lineage>
        <taxon>Bacteria</taxon>
        <taxon>Pseudomonadati</taxon>
        <taxon>Pseudomonadota</taxon>
        <taxon>Alphaproteobacteria</taxon>
        <taxon>Hyphomicrobiales</taxon>
        <taxon>Rhizobiaceae</taxon>
        <taxon>Sinorhizobium/Ensifer group</taxon>
        <taxon>Sinorhizobium</taxon>
    </lineage>
</organism>
<evidence type="ECO:0000255" key="1">
    <source>
        <dbReference type="HAMAP-Rule" id="MF_00435"/>
    </source>
</evidence>
<evidence type="ECO:0000255" key="2">
    <source>
        <dbReference type="PROSITE-ProRule" id="PRU01197"/>
    </source>
</evidence>
<evidence type="ECO:0000255" key="3">
    <source>
        <dbReference type="PROSITE-ProRule" id="PRU01198"/>
    </source>
</evidence>
<feature type="chain" id="PRO_1000050574" description="Ketol-acid reductoisomerase (NADP(+))">
    <location>
        <begin position="1"/>
        <end position="339"/>
    </location>
</feature>
<feature type="domain" description="KARI N-terminal Rossmann" evidence="2">
    <location>
        <begin position="1"/>
        <end position="182"/>
    </location>
</feature>
<feature type="domain" description="KARI C-terminal knotted" evidence="3">
    <location>
        <begin position="183"/>
        <end position="328"/>
    </location>
</feature>
<feature type="active site" evidence="1">
    <location>
        <position position="108"/>
    </location>
</feature>
<feature type="binding site" evidence="1">
    <location>
        <begin position="24"/>
        <end position="27"/>
    </location>
    <ligand>
        <name>NADP(+)</name>
        <dbReference type="ChEBI" id="CHEBI:58349"/>
    </ligand>
</feature>
<feature type="binding site" evidence="1">
    <location>
        <position position="48"/>
    </location>
    <ligand>
        <name>NADP(+)</name>
        <dbReference type="ChEBI" id="CHEBI:58349"/>
    </ligand>
</feature>
<feature type="binding site" evidence="1">
    <location>
        <position position="51"/>
    </location>
    <ligand>
        <name>NADP(+)</name>
        <dbReference type="ChEBI" id="CHEBI:58349"/>
    </ligand>
</feature>
<feature type="binding site" evidence="1">
    <location>
        <position position="53"/>
    </location>
    <ligand>
        <name>NADP(+)</name>
        <dbReference type="ChEBI" id="CHEBI:58349"/>
    </ligand>
</feature>
<feature type="binding site" evidence="1">
    <location>
        <begin position="83"/>
        <end position="86"/>
    </location>
    <ligand>
        <name>NADP(+)</name>
        <dbReference type="ChEBI" id="CHEBI:58349"/>
    </ligand>
</feature>
<feature type="binding site" evidence="1">
    <location>
        <position position="134"/>
    </location>
    <ligand>
        <name>NADP(+)</name>
        <dbReference type="ChEBI" id="CHEBI:58349"/>
    </ligand>
</feature>
<feature type="binding site" evidence="1">
    <location>
        <position position="191"/>
    </location>
    <ligand>
        <name>Mg(2+)</name>
        <dbReference type="ChEBI" id="CHEBI:18420"/>
        <label>1</label>
    </ligand>
</feature>
<feature type="binding site" evidence="1">
    <location>
        <position position="191"/>
    </location>
    <ligand>
        <name>Mg(2+)</name>
        <dbReference type="ChEBI" id="CHEBI:18420"/>
        <label>2</label>
    </ligand>
</feature>
<feature type="binding site" evidence="1">
    <location>
        <position position="195"/>
    </location>
    <ligand>
        <name>Mg(2+)</name>
        <dbReference type="ChEBI" id="CHEBI:18420"/>
        <label>1</label>
    </ligand>
</feature>
<feature type="binding site" evidence="1">
    <location>
        <position position="227"/>
    </location>
    <ligand>
        <name>Mg(2+)</name>
        <dbReference type="ChEBI" id="CHEBI:18420"/>
        <label>2</label>
    </ligand>
</feature>
<feature type="binding site" evidence="1">
    <location>
        <position position="231"/>
    </location>
    <ligand>
        <name>Mg(2+)</name>
        <dbReference type="ChEBI" id="CHEBI:18420"/>
        <label>2</label>
    </ligand>
</feature>
<feature type="binding site" evidence="1">
    <location>
        <position position="252"/>
    </location>
    <ligand>
        <name>substrate</name>
    </ligand>
</feature>
<reference key="1">
    <citation type="submission" date="2007-06" db="EMBL/GenBank/DDBJ databases">
        <title>Complete sequence of Sinorhizobium medicae WSM419 chromosome.</title>
        <authorList>
            <consortium name="US DOE Joint Genome Institute"/>
            <person name="Copeland A."/>
            <person name="Lucas S."/>
            <person name="Lapidus A."/>
            <person name="Barry K."/>
            <person name="Glavina del Rio T."/>
            <person name="Dalin E."/>
            <person name="Tice H."/>
            <person name="Pitluck S."/>
            <person name="Chain P."/>
            <person name="Malfatti S."/>
            <person name="Shin M."/>
            <person name="Vergez L."/>
            <person name="Schmutz J."/>
            <person name="Larimer F."/>
            <person name="Land M."/>
            <person name="Hauser L."/>
            <person name="Kyrpides N."/>
            <person name="Mikhailova N."/>
            <person name="Reeve W.G."/>
            <person name="Richardson P."/>
        </authorList>
    </citation>
    <scope>NUCLEOTIDE SEQUENCE [LARGE SCALE GENOMIC DNA]</scope>
    <source>
        <strain>WSM419</strain>
    </source>
</reference>
<name>ILVC_SINMW</name>
<dbReference type="EC" id="1.1.1.86" evidence="1"/>
<dbReference type="EMBL" id="CP000738">
    <property type="protein sequence ID" value="ABR60796.1"/>
    <property type="molecule type" value="Genomic_DNA"/>
</dbReference>
<dbReference type="RefSeq" id="WP_011976095.1">
    <property type="nucleotide sequence ID" value="NC_009636.1"/>
</dbReference>
<dbReference type="RefSeq" id="YP_001327631.1">
    <property type="nucleotide sequence ID" value="NC_009636.1"/>
</dbReference>
<dbReference type="SMR" id="A6UAW6"/>
<dbReference type="STRING" id="366394.Smed_1962"/>
<dbReference type="GeneID" id="61612872"/>
<dbReference type="KEGG" id="smd:Smed_1962"/>
<dbReference type="PATRIC" id="fig|366394.8.peg.5117"/>
<dbReference type="eggNOG" id="COG0059">
    <property type="taxonomic scope" value="Bacteria"/>
</dbReference>
<dbReference type="HOGENOM" id="CLU_033821_0_1_5"/>
<dbReference type="OrthoDB" id="9804088at2"/>
<dbReference type="UniPathway" id="UPA00047">
    <property type="reaction ID" value="UER00056"/>
</dbReference>
<dbReference type="UniPathway" id="UPA00049">
    <property type="reaction ID" value="UER00060"/>
</dbReference>
<dbReference type="Proteomes" id="UP000001108">
    <property type="component" value="Chromosome"/>
</dbReference>
<dbReference type="GO" id="GO:0005829">
    <property type="term" value="C:cytosol"/>
    <property type="evidence" value="ECO:0007669"/>
    <property type="project" value="TreeGrafter"/>
</dbReference>
<dbReference type="GO" id="GO:0004455">
    <property type="term" value="F:ketol-acid reductoisomerase activity"/>
    <property type="evidence" value="ECO:0007669"/>
    <property type="project" value="UniProtKB-UniRule"/>
</dbReference>
<dbReference type="GO" id="GO:0000287">
    <property type="term" value="F:magnesium ion binding"/>
    <property type="evidence" value="ECO:0007669"/>
    <property type="project" value="UniProtKB-UniRule"/>
</dbReference>
<dbReference type="GO" id="GO:0050661">
    <property type="term" value="F:NADP binding"/>
    <property type="evidence" value="ECO:0007669"/>
    <property type="project" value="InterPro"/>
</dbReference>
<dbReference type="GO" id="GO:0009097">
    <property type="term" value="P:isoleucine biosynthetic process"/>
    <property type="evidence" value="ECO:0007669"/>
    <property type="project" value="UniProtKB-UniRule"/>
</dbReference>
<dbReference type="GO" id="GO:0009099">
    <property type="term" value="P:L-valine biosynthetic process"/>
    <property type="evidence" value="ECO:0007669"/>
    <property type="project" value="UniProtKB-UniRule"/>
</dbReference>
<dbReference type="FunFam" id="3.40.50.720:FF:000023">
    <property type="entry name" value="Ketol-acid reductoisomerase (NADP(+))"/>
    <property type="match status" value="1"/>
</dbReference>
<dbReference type="Gene3D" id="6.10.240.10">
    <property type="match status" value="1"/>
</dbReference>
<dbReference type="Gene3D" id="3.40.50.720">
    <property type="entry name" value="NAD(P)-binding Rossmann-like Domain"/>
    <property type="match status" value="1"/>
</dbReference>
<dbReference type="HAMAP" id="MF_00435">
    <property type="entry name" value="IlvC"/>
    <property type="match status" value="1"/>
</dbReference>
<dbReference type="InterPro" id="IPR008927">
    <property type="entry name" value="6-PGluconate_DH-like_C_sf"/>
</dbReference>
<dbReference type="InterPro" id="IPR013023">
    <property type="entry name" value="KARI"/>
</dbReference>
<dbReference type="InterPro" id="IPR000506">
    <property type="entry name" value="KARI_C"/>
</dbReference>
<dbReference type="InterPro" id="IPR013116">
    <property type="entry name" value="KARI_N"/>
</dbReference>
<dbReference type="InterPro" id="IPR014359">
    <property type="entry name" value="KARI_prok"/>
</dbReference>
<dbReference type="InterPro" id="IPR036291">
    <property type="entry name" value="NAD(P)-bd_dom_sf"/>
</dbReference>
<dbReference type="NCBIfam" id="TIGR00465">
    <property type="entry name" value="ilvC"/>
    <property type="match status" value="1"/>
</dbReference>
<dbReference type="NCBIfam" id="NF004017">
    <property type="entry name" value="PRK05479.1"/>
    <property type="match status" value="1"/>
</dbReference>
<dbReference type="NCBIfam" id="NF009940">
    <property type="entry name" value="PRK13403.1"/>
    <property type="match status" value="1"/>
</dbReference>
<dbReference type="PANTHER" id="PTHR21371">
    <property type="entry name" value="KETOL-ACID REDUCTOISOMERASE, MITOCHONDRIAL"/>
    <property type="match status" value="1"/>
</dbReference>
<dbReference type="PANTHER" id="PTHR21371:SF1">
    <property type="entry name" value="KETOL-ACID REDUCTOISOMERASE, MITOCHONDRIAL"/>
    <property type="match status" value="1"/>
</dbReference>
<dbReference type="Pfam" id="PF01450">
    <property type="entry name" value="KARI_C"/>
    <property type="match status" value="1"/>
</dbReference>
<dbReference type="Pfam" id="PF07991">
    <property type="entry name" value="KARI_N"/>
    <property type="match status" value="1"/>
</dbReference>
<dbReference type="PIRSF" id="PIRSF000116">
    <property type="entry name" value="IlvC_gammaproteo"/>
    <property type="match status" value="1"/>
</dbReference>
<dbReference type="SUPFAM" id="SSF48179">
    <property type="entry name" value="6-phosphogluconate dehydrogenase C-terminal domain-like"/>
    <property type="match status" value="1"/>
</dbReference>
<dbReference type="SUPFAM" id="SSF51735">
    <property type="entry name" value="NAD(P)-binding Rossmann-fold domains"/>
    <property type="match status" value="1"/>
</dbReference>
<dbReference type="PROSITE" id="PS51851">
    <property type="entry name" value="KARI_C"/>
    <property type="match status" value="1"/>
</dbReference>
<dbReference type="PROSITE" id="PS51850">
    <property type="entry name" value="KARI_N"/>
    <property type="match status" value="1"/>
</dbReference>
<sequence length="339" mass="36625">MRVYYDRDADLNLIKSKKVAIIGYGSQGRAHALNLKDSGAQNVAIALKSGSATAKKAEADGFKVMTVAEAAAWADLMMMATPDELQADIYKAEIAGNIRDGAAIAFAHGLNVHFGLIEPKASVDVVMIAPKGPGHTVRGEYQKGGGVPCLVAVHQDASGNALDLALSYACGVGGGRSGIIETNFKEECETDLFGEQVVLCGGLVELIRAGFETLVEAGYAPEMAYFECLHEVKLIVDLIYEGGIANMNYSISNTAEWGEYVTGPRIITEETKAEMKRVLKDIQTGKFTSEWMQEYRSGAARFKGIRRVNDAHQIEEVGAKLRGMMPWIGKNKLVDKAKN</sequence>